<evidence type="ECO:0000255" key="1"/>
<evidence type="ECO:0000305" key="2"/>
<proteinExistence type="evidence at transcript level"/>
<accession>A0MH68</accession>
<protein>
    <recommendedName>
        <fullName>Probable phospho-2-dehydro-3-deoxyheptonate aldolase, chloroplastic</fullName>
        <ecNumber>2.5.1.54</ecNumber>
    </recommendedName>
    <alternativeName>
        <fullName>3-deoxy-D-arabino-heptulosonate 7-phosphate synthase</fullName>
    </alternativeName>
    <alternativeName>
        <fullName>CrDHS1</fullName>
    </alternativeName>
    <alternativeName>
        <fullName>DAHP synthase</fullName>
    </alternativeName>
    <alternativeName>
        <fullName>Phospho-2-keto-3-deoxyheptonate aldolase</fullName>
    </alternativeName>
</protein>
<feature type="transit peptide" description="Chloroplast" evidence="1">
    <location>
        <begin position="1"/>
        <end position="58"/>
    </location>
</feature>
<feature type="chain" id="PRO_0000312804" description="Probable phospho-2-dehydro-3-deoxyheptonate aldolase, chloroplastic">
    <location>
        <begin position="59"/>
        <end position="493"/>
    </location>
</feature>
<organism>
    <name type="scientific">Catharanthus roseus</name>
    <name type="common">Madagascar periwinkle</name>
    <name type="synonym">Vinca rosea</name>
    <dbReference type="NCBI Taxonomy" id="4058"/>
    <lineage>
        <taxon>Eukaryota</taxon>
        <taxon>Viridiplantae</taxon>
        <taxon>Streptophyta</taxon>
        <taxon>Embryophyta</taxon>
        <taxon>Tracheophyta</taxon>
        <taxon>Spermatophyta</taxon>
        <taxon>Magnoliopsida</taxon>
        <taxon>eudicotyledons</taxon>
        <taxon>Gunneridae</taxon>
        <taxon>Pentapetalae</taxon>
        <taxon>asterids</taxon>
        <taxon>lamiids</taxon>
        <taxon>Gentianales</taxon>
        <taxon>Apocynaceae</taxon>
        <taxon>Rauvolfioideae</taxon>
        <taxon>Vinceae</taxon>
        <taxon>Catharanthinae</taxon>
        <taxon>Catharanthus</taxon>
    </lineage>
</organism>
<reference key="1">
    <citation type="submission" date="2006-07" db="EMBL/GenBank/DDBJ databases">
        <authorList>
            <person name="Ramani S."/>
            <person name="Chelliah J."/>
        </authorList>
    </citation>
    <scope>NUCLEOTIDE SEQUENCE [MRNA]</scope>
</reference>
<sequence length="493" mass="54743">MAMSNTSALASKLLPSCKPHQPTLTFFSPSTTCQKKPRSSRPISAAVHVTQPPKTPISSATATKRRLSLLNGVWESWKSKKALQLPEYPDEGKLDGVLKTIEAFPPLVFAGEARSLEEKLAQAAMGNAFLLQGGDCAESFKELMPLYSRYFQNTASDECRLTFGGQCPVIKVGRMAGQFAKPRLDPFEEKDGLWLSGANGWPVAWEAYCKLQQLSPSRALLLVVCCYAESHPMDLDFVEHSEQGDRYQELAHRVDEALGFMDACGLTVDHPIMATTEFWTSHECLLLPYEQALTREDSTSGLFYDCSAHMLWVGERTRQLDGAHVEFLRGVANPLGIKVSQKMDPNELVNLIEILNPTNKPGRITVIVRMGAENMRVKLPHLIRAVRGAGQIVTWVCDPMHGNTIKAPCGLKTRAFDAILAEVRAFYDVHEQEGTLPGTECVGGSRTITYDDRQTRYHTHCDPRLNASQSLELAFIIAERLRKEESVLNAHSP</sequence>
<keyword id="KW-0028">Amino-acid biosynthesis</keyword>
<keyword id="KW-0057">Aromatic amino acid biosynthesis</keyword>
<keyword id="KW-0150">Chloroplast</keyword>
<keyword id="KW-0934">Plastid</keyword>
<keyword id="KW-0808">Transferase</keyword>
<keyword id="KW-0809">Transit peptide</keyword>
<name>AROF_CATRO</name>
<dbReference type="EC" id="2.5.1.54"/>
<dbReference type="EMBL" id="DQ859024">
    <property type="protein sequence ID" value="ABK29527.1"/>
    <property type="status" value="ALT_FRAME"/>
    <property type="molecule type" value="mRNA"/>
</dbReference>
<dbReference type="SMR" id="A0MH68"/>
<dbReference type="UniPathway" id="UPA00053">
    <property type="reaction ID" value="UER00084"/>
</dbReference>
<dbReference type="GO" id="GO:0009507">
    <property type="term" value="C:chloroplast"/>
    <property type="evidence" value="ECO:0007669"/>
    <property type="project" value="UniProtKB-SubCell"/>
</dbReference>
<dbReference type="GO" id="GO:0003849">
    <property type="term" value="F:3-deoxy-7-phosphoheptulonate synthase activity"/>
    <property type="evidence" value="ECO:0007669"/>
    <property type="project" value="UniProtKB-EC"/>
</dbReference>
<dbReference type="GO" id="GO:0008652">
    <property type="term" value="P:amino acid biosynthetic process"/>
    <property type="evidence" value="ECO:0007669"/>
    <property type="project" value="UniProtKB-KW"/>
</dbReference>
<dbReference type="GO" id="GO:0009073">
    <property type="term" value="P:aromatic amino acid family biosynthetic process"/>
    <property type="evidence" value="ECO:0007669"/>
    <property type="project" value="UniProtKB-KW"/>
</dbReference>
<dbReference type="GO" id="GO:0009423">
    <property type="term" value="P:chorismate biosynthetic process"/>
    <property type="evidence" value="ECO:0007669"/>
    <property type="project" value="UniProtKB-UniPathway"/>
</dbReference>
<dbReference type="FunFam" id="3.20.20.70:FF:000128">
    <property type="entry name" value="Phospho-2-dehydro-3-deoxyheptonate aldolase"/>
    <property type="match status" value="1"/>
</dbReference>
<dbReference type="Gene3D" id="3.20.20.70">
    <property type="entry name" value="Aldolase class I"/>
    <property type="match status" value="1"/>
</dbReference>
<dbReference type="InterPro" id="IPR013785">
    <property type="entry name" value="Aldolase_TIM"/>
</dbReference>
<dbReference type="InterPro" id="IPR002480">
    <property type="entry name" value="DAHP_synth_2"/>
</dbReference>
<dbReference type="PANTHER" id="PTHR21337">
    <property type="entry name" value="PHOSPHO-2-DEHYDRO-3-DEOXYHEPTONATE ALDOLASE 1, 2"/>
    <property type="match status" value="1"/>
</dbReference>
<dbReference type="PANTHER" id="PTHR21337:SF24">
    <property type="entry name" value="PHOSPHO-2-DEHYDRO-3-DEOXYHEPTONATE ALDOLASE 1, CHLOROPLASTIC"/>
    <property type="match status" value="1"/>
</dbReference>
<dbReference type="Pfam" id="PF01474">
    <property type="entry name" value="DAHP_synth_2"/>
    <property type="match status" value="1"/>
</dbReference>
<dbReference type="SUPFAM" id="SSF51569">
    <property type="entry name" value="Aldolase"/>
    <property type="match status" value="1"/>
</dbReference>
<gene>
    <name type="primary">DHS1</name>
</gene>
<comment type="catalytic activity">
    <reaction>
        <text>D-erythrose 4-phosphate + phosphoenolpyruvate + H2O = 7-phospho-2-dehydro-3-deoxy-D-arabino-heptonate + phosphate</text>
        <dbReference type="Rhea" id="RHEA:14717"/>
        <dbReference type="ChEBI" id="CHEBI:15377"/>
        <dbReference type="ChEBI" id="CHEBI:16897"/>
        <dbReference type="ChEBI" id="CHEBI:43474"/>
        <dbReference type="ChEBI" id="CHEBI:58394"/>
        <dbReference type="ChEBI" id="CHEBI:58702"/>
        <dbReference type="EC" id="2.5.1.54"/>
    </reaction>
</comment>
<comment type="pathway">
    <text>Metabolic intermediate biosynthesis; chorismate biosynthesis; chorismate from D-erythrose 4-phosphate and phosphoenolpyruvate: step 1/7.</text>
</comment>
<comment type="subcellular location">
    <subcellularLocation>
        <location evidence="2">Plastid</location>
        <location evidence="2">Chloroplast</location>
    </subcellularLocation>
</comment>
<comment type="similarity">
    <text evidence="2">Belongs to the class-II DAHP synthase family.</text>
</comment>
<comment type="sequence caution" evidence="2">
    <conflict type="frameshift">
        <sequence resource="EMBL-CDS" id="ABK29527"/>
    </conflict>
</comment>